<reference key="1">
    <citation type="journal article" date="2009" name="Appl. Environ. Microbiol.">
        <title>Three genomes from the phylum Acidobacteria provide insight into the lifestyles of these microorganisms in soils.</title>
        <authorList>
            <person name="Ward N.L."/>
            <person name="Challacombe J.F."/>
            <person name="Janssen P.H."/>
            <person name="Henrissat B."/>
            <person name="Coutinho P.M."/>
            <person name="Wu M."/>
            <person name="Xie G."/>
            <person name="Haft D.H."/>
            <person name="Sait M."/>
            <person name="Badger J."/>
            <person name="Barabote R.D."/>
            <person name="Bradley B."/>
            <person name="Brettin T.S."/>
            <person name="Brinkac L.M."/>
            <person name="Bruce D."/>
            <person name="Creasy T."/>
            <person name="Daugherty S.C."/>
            <person name="Davidsen T.M."/>
            <person name="DeBoy R.T."/>
            <person name="Detter J.C."/>
            <person name="Dodson R.J."/>
            <person name="Durkin A.S."/>
            <person name="Ganapathy A."/>
            <person name="Gwinn-Giglio M."/>
            <person name="Han C.S."/>
            <person name="Khouri H."/>
            <person name="Kiss H."/>
            <person name="Kothari S.P."/>
            <person name="Madupu R."/>
            <person name="Nelson K.E."/>
            <person name="Nelson W.C."/>
            <person name="Paulsen I."/>
            <person name="Penn K."/>
            <person name="Ren Q."/>
            <person name="Rosovitz M.J."/>
            <person name="Selengut J.D."/>
            <person name="Shrivastava S."/>
            <person name="Sullivan S.A."/>
            <person name="Tapia R."/>
            <person name="Thompson L.S."/>
            <person name="Watkins K.L."/>
            <person name="Yang Q."/>
            <person name="Yu C."/>
            <person name="Zafar N."/>
            <person name="Zhou L."/>
            <person name="Kuske C.R."/>
        </authorList>
    </citation>
    <scope>NUCLEOTIDE SEQUENCE [LARGE SCALE GENOMIC DNA]</scope>
    <source>
        <strain>ATCC 51196 / DSM 11244 / BCRC 80197 / JCM 7670 / NBRC 15755 / NCIMB 13165 / 161</strain>
    </source>
</reference>
<sequence>MTPKRERAVVCLSGGMDSCVCAAIAARDYEPYAIHFSYGQRTEARELVSARSVAERLGFKDLLHLKIDLFRRIGGSALTDTSIDVPKAPAEEAAIGAEIPVTYVPFRNAHFLAAAVSWAEVLGASKIVIGAVEQDSSGYPDCRPAYYEAFQHLIETGTKEGSIRVETPLIQLRKREIVRLGLELGAPLDLTWSCYSGAEEACGECESCVLRLRAFEEADAVDPIPYAHR</sequence>
<keyword id="KW-0067">ATP-binding</keyword>
<keyword id="KW-0436">Ligase</keyword>
<keyword id="KW-0479">Metal-binding</keyword>
<keyword id="KW-0547">Nucleotide-binding</keyword>
<keyword id="KW-0671">Queuosine biosynthesis</keyword>
<keyword id="KW-1185">Reference proteome</keyword>
<keyword id="KW-0862">Zinc</keyword>
<feature type="chain" id="PRO_1000186544" description="7-cyano-7-deazaguanine synthase">
    <location>
        <begin position="1"/>
        <end position="229"/>
    </location>
</feature>
<feature type="binding site" evidence="1">
    <location>
        <begin position="12"/>
        <end position="22"/>
    </location>
    <ligand>
        <name>ATP</name>
        <dbReference type="ChEBI" id="CHEBI:30616"/>
    </ligand>
</feature>
<feature type="binding site" evidence="1">
    <location>
        <position position="194"/>
    </location>
    <ligand>
        <name>Zn(2+)</name>
        <dbReference type="ChEBI" id="CHEBI:29105"/>
    </ligand>
</feature>
<feature type="binding site" evidence="1">
    <location>
        <position position="202"/>
    </location>
    <ligand>
        <name>Zn(2+)</name>
        <dbReference type="ChEBI" id="CHEBI:29105"/>
    </ligand>
</feature>
<feature type="binding site" evidence="1">
    <location>
        <position position="205"/>
    </location>
    <ligand>
        <name>Zn(2+)</name>
        <dbReference type="ChEBI" id="CHEBI:29105"/>
    </ligand>
</feature>
<feature type="binding site" evidence="1">
    <location>
        <position position="208"/>
    </location>
    <ligand>
        <name>Zn(2+)</name>
        <dbReference type="ChEBI" id="CHEBI:29105"/>
    </ligand>
</feature>
<evidence type="ECO:0000255" key="1">
    <source>
        <dbReference type="HAMAP-Rule" id="MF_01633"/>
    </source>
</evidence>
<gene>
    <name evidence="1" type="primary">queC</name>
    <name type="ordered locus">ACP_1848</name>
</gene>
<name>QUEC_ACIC5</name>
<accession>C1F844</accession>
<protein>
    <recommendedName>
        <fullName evidence="1">7-cyano-7-deazaguanine synthase</fullName>
        <ecNumber evidence="1">6.3.4.20</ecNumber>
    </recommendedName>
    <alternativeName>
        <fullName evidence="1">7-cyano-7-carbaguanine synthase</fullName>
    </alternativeName>
    <alternativeName>
        <fullName evidence="1">PreQ(0) synthase</fullName>
    </alternativeName>
    <alternativeName>
        <fullName evidence="1">Queuosine biosynthesis protein QueC</fullName>
    </alternativeName>
</protein>
<comment type="function">
    <text evidence="1">Catalyzes the ATP-dependent conversion of 7-carboxy-7-deazaguanine (CDG) to 7-cyano-7-deazaguanine (preQ(0)).</text>
</comment>
<comment type="catalytic activity">
    <reaction evidence="1">
        <text>7-carboxy-7-deazaguanine + NH4(+) + ATP = 7-cyano-7-deazaguanine + ADP + phosphate + H2O + H(+)</text>
        <dbReference type="Rhea" id="RHEA:27982"/>
        <dbReference type="ChEBI" id="CHEBI:15377"/>
        <dbReference type="ChEBI" id="CHEBI:15378"/>
        <dbReference type="ChEBI" id="CHEBI:28938"/>
        <dbReference type="ChEBI" id="CHEBI:30616"/>
        <dbReference type="ChEBI" id="CHEBI:43474"/>
        <dbReference type="ChEBI" id="CHEBI:45075"/>
        <dbReference type="ChEBI" id="CHEBI:61036"/>
        <dbReference type="ChEBI" id="CHEBI:456216"/>
        <dbReference type="EC" id="6.3.4.20"/>
    </reaction>
</comment>
<comment type="cofactor">
    <cofactor evidence="1">
        <name>Zn(2+)</name>
        <dbReference type="ChEBI" id="CHEBI:29105"/>
    </cofactor>
    <text evidence="1">Binds 1 zinc ion per subunit.</text>
</comment>
<comment type="pathway">
    <text evidence="1">Purine metabolism; 7-cyano-7-deazaguanine biosynthesis.</text>
</comment>
<comment type="similarity">
    <text evidence="1">Belongs to the QueC family.</text>
</comment>
<dbReference type="EC" id="6.3.4.20" evidence="1"/>
<dbReference type="EMBL" id="CP001472">
    <property type="protein sequence ID" value="ACO31557.1"/>
    <property type="molecule type" value="Genomic_DNA"/>
</dbReference>
<dbReference type="RefSeq" id="WP_015896966.1">
    <property type="nucleotide sequence ID" value="NC_012483.1"/>
</dbReference>
<dbReference type="SMR" id="C1F844"/>
<dbReference type="FunCoup" id="C1F844">
    <property type="interactions" value="157"/>
</dbReference>
<dbReference type="STRING" id="240015.ACP_1848"/>
<dbReference type="KEGG" id="aca:ACP_1848"/>
<dbReference type="eggNOG" id="COG0603">
    <property type="taxonomic scope" value="Bacteria"/>
</dbReference>
<dbReference type="HOGENOM" id="CLU_081854_1_0_0"/>
<dbReference type="InParanoid" id="C1F844"/>
<dbReference type="OrthoDB" id="9789567at2"/>
<dbReference type="UniPathway" id="UPA00391"/>
<dbReference type="Proteomes" id="UP000002207">
    <property type="component" value="Chromosome"/>
</dbReference>
<dbReference type="GO" id="GO:0005524">
    <property type="term" value="F:ATP binding"/>
    <property type="evidence" value="ECO:0007669"/>
    <property type="project" value="UniProtKB-UniRule"/>
</dbReference>
<dbReference type="GO" id="GO:0016879">
    <property type="term" value="F:ligase activity, forming carbon-nitrogen bonds"/>
    <property type="evidence" value="ECO:0007669"/>
    <property type="project" value="UniProtKB-UniRule"/>
</dbReference>
<dbReference type="GO" id="GO:0008270">
    <property type="term" value="F:zinc ion binding"/>
    <property type="evidence" value="ECO:0007669"/>
    <property type="project" value="UniProtKB-UniRule"/>
</dbReference>
<dbReference type="GO" id="GO:0008616">
    <property type="term" value="P:queuosine biosynthetic process"/>
    <property type="evidence" value="ECO:0007669"/>
    <property type="project" value="UniProtKB-UniRule"/>
</dbReference>
<dbReference type="CDD" id="cd01995">
    <property type="entry name" value="QueC-like"/>
    <property type="match status" value="1"/>
</dbReference>
<dbReference type="Gene3D" id="3.40.50.620">
    <property type="entry name" value="HUPs"/>
    <property type="match status" value="1"/>
</dbReference>
<dbReference type="HAMAP" id="MF_01633">
    <property type="entry name" value="QueC"/>
    <property type="match status" value="1"/>
</dbReference>
<dbReference type="InterPro" id="IPR018317">
    <property type="entry name" value="QueC"/>
</dbReference>
<dbReference type="InterPro" id="IPR014729">
    <property type="entry name" value="Rossmann-like_a/b/a_fold"/>
</dbReference>
<dbReference type="NCBIfam" id="TIGR00364">
    <property type="entry name" value="7-cyano-7-deazaguanine synthase QueC"/>
    <property type="match status" value="1"/>
</dbReference>
<dbReference type="PANTHER" id="PTHR42914">
    <property type="entry name" value="7-CYANO-7-DEAZAGUANINE SYNTHASE"/>
    <property type="match status" value="1"/>
</dbReference>
<dbReference type="PANTHER" id="PTHR42914:SF1">
    <property type="entry name" value="7-CYANO-7-DEAZAGUANINE SYNTHASE"/>
    <property type="match status" value="1"/>
</dbReference>
<dbReference type="Pfam" id="PF06508">
    <property type="entry name" value="QueC"/>
    <property type="match status" value="1"/>
</dbReference>
<dbReference type="PIRSF" id="PIRSF006293">
    <property type="entry name" value="ExsB"/>
    <property type="match status" value="1"/>
</dbReference>
<dbReference type="SUPFAM" id="SSF52402">
    <property type="entry name" value="Adenine nucleotide alpha hydrolases-like"/>
    <property type="match status" value="1"/>
</dbReference>
<organism>
    <name type="scientific">Acidobacterium capsulatum (strain ATCC 51196 / DSM 11244 / BCRC 80197 / JCM 7670 / NBRC 15755 / NCIMB 13165 / 161)</name>
    <dbReference type="NCBI Taxonomy" id="240015"/>
    <lineage>
        <taxon>Bacteria</taxon>
        <taxon>Pseudomonadati</taxon>
        <taxon>Acidobacteriota</taxon>
        <taxon>Terriglobia</taxon>
        <taxon>Terriglobales</taxon>
        <taxon>Acidobacteriaceae</taxon>
        <taxon>Acidobacterium</taxon>
    </lineage>
</organism>
<proteinExistence type="inferred from homology"/>